<organism>
    <name type="scientific">Saccharomyces cerevisiae (strain ATCC 204508 / S288c)</name>
    <name type="common">Baker's yeast</name>
    <dbReference type="NCBI Taxonomy" id="559292"/>
    <lineage>
        <taxon>Eukaryota</taxon>
        <taxon>Fungi</taxon>
        <taxon>Dikarya</taxon>
        <taxon>Ascomycota</taxon>
        <taxon>Saccharomycotina</taxon>
        <taxon>Saccharomycetes</taxon>
        <taxon>Saccharomycetales</taxon>
        <taxon>Saccharomycetaceae</taxon>
        <taxon>Saccharomyces</taxon>
    </lineage>
</organism>
<feature type="chain" id="PRO_0000167135" description="Cystathionine beta-synthase">
    <location>
        <begin position="1"/>
        <end position="507"/>
    </location>
</feature>
<feature type="domain" description="CBS" evidence="2">
    <location>
        <begin position="373"/>
        <end position="432"/>
    </location>
</feature>
<feature type="binding site" evidence="1">
    <location>
        <position position="84"/>
    </location>
    <ligand>
        <name>pyridoxal 5'-phosphate</name>
        <dbReference type="ChEBI" id="CHEBI:597326"/>
    </ligand>
</feature>
<feature type="binding site" evidence="1">
    <location>
        <begin position="196"/>
        <end position="200"/>
    </location>
    <ligand>
        <name>pyridoxal 5'-phosphate</name>
        <dbReference type="ChEBI" id="CHEBI:597326"/>
    </ligand>
</feature>
<feature type="binding site" evidence="1">
    <location>
        <position position="289"/>
    </location>
    <ligand>
        <name>pyridoxal 5'-phosphate</name>
        <dbReference type="ChEBI" id="CHEBI:597326"/>
    </ligand>
</feature>
<feature type="modified residue" description="N6-(pyridoxal phosphate)lysine" evidence="1">
    <location>
        <position position="53"/>
    </location>
</feature>
<feature type="modified residue" description="Phosphoserine" evidence="5">
    <location>
        <position position="134"/>
    </location>
</feature>
<feature type="modified residue" description="Phosphoserine" evidence="6">
    <location>
        <position position="350"/>
    </location>
</feature>
<feature type="modified residue" description="Phosphoserine" evidence="5 6">
    <location>
        <position position="424"/>
    </location>
</feature>
<feature type="sequence variant" description="In strain: UCD932.">
    <original>S</original>
    <variation>N</variation>
    <location>
        <position position="504"/>
    </location>
</feature>
<feature type="sequence conflict" description="In Ref. 3; AAC37401." evidence="4" ref="3">
    <original>T</original>
    <variation>A</variation>
    <location>
        <position position="2"/>
    </location>
</feature>
<feature type="sequence conflict" description="In Ref. 3; AAC37401." evidence="4" ref="3">
    <original>A</original>
    <variation>T</variation>
    <location>
        <position position="8"/>
    </location>
</feature>
<feature type="sequence conflict" description="In Ref. 3; AAC37401." evidence="4" ref="3">
    <location>
        <position position="63"/>
    </location>
</feature>
<feature type="sequence conflict" description="In Ref. 3; AAC37401." evidence="4" ref="3">
    <original>L</original>
    <variation>W</variation>
    <location>
        <position position="104"/>
    </location>
</feature>
<feature type="sequence conflict" description="In Ref. 3; AAC37401." evidence="4" ref="3">
    <original>A</original>
    <variation>V</variation>
    <location>
        <position position="129"/>
    </location>
</feature>
<feature type="sequence conflict" description="In Ref. 3; AAC37401." evidence="4" ref="3">
    <original>N</original>
    <variation>T</variation>
    <location>
        <position position="163"/>
    </location>
</feature>
<feature type="sequence conflict" description="In Ref. 3; AAC37401." evidence="4" ref="3">
    <original>D</original>
    <variation>Y</variation>
    <location>
        <position position="407"/>
    </location>
</feature>
<feature type="sequence conflict" description="In Ref. 3; AAC37401." evidence="4" ref="3">
    <original>GK</original>
    <variation>VE</variation>
    <location>
        <begin position="436"/>
        <end position="437"/>
    </location>
</feature>
<feature type="sequence conflict" description="In Ref. 3; AAC37401." evidence="4" ref="3">
    <original>F</original>
    <variation>V</variation>
    <location>
        <position position="441"/>
    </location>
</feature>
<feature type="sequence conflict" description="In Ref. 3; AAC37401." evidence="4" ref="3">
    <original>K</original>
    <variation>E</variation>
    <location>
        <position position="481"/>
    </location>
</feature>
<feature type="helix" evidence="7">
    <location>
        <begin position="14"/>
        <end position="17"/>
    </location>
</feature>
<feature type="strand" evidence="7">
    <location>
        <begin position="23"/>
        <end position="26"/>
    </location>
</feature>
<feature type="helix" evidence="7">
    <location>
        <begin position="29"/>
        <end position="32"/>
    </location>
</feature>
<feature type="strand" evidence="7">
    <location>
        <begin position="37"/>
        <end position="43"/>
    </location>
</feature>
<feature type="helix" evidence="7">
    <location>
        <begin position="44"/>
        <end position="46"/>
    </location>
</feature>
<feature type="helix" evidence="7">
    <location>
        <begin position="54"/>
        <end position="66"/>
    </location>
</feature>
<feature type="turn" evidence="7">
    <location>
        <begin position="72"/>
        <end position="74"/>
    </location>
</feature>
<feature type="strand" evidence="7">
    <location>
        <begin position="76"/>
        <end position="80"/>
    </location>
</feature>
<feature type="helix" evidence="7">
    <location>
        <begin position="84"/>
        <end position="96"/>
    </location>
</feature>
<feature type="strand" evidence="7">
    <location>
        <begin position="99"/>
        <end position="105"/>
    </location>
</feature>
<feature type="helix" evidence="7">
    <location>
        <begin position="110"/>
        <end position="118"/>
    </location>
</feature>
<feature type="strand" evidence="7">
    <location>
        <begin position="122"/>
        <end position="126"/>
    </location>
</feature>
<feature type="helix" evidence="7">
    <location>
        <begin position="138"/>
        <end position="148"/>
    </location>
</feature>
<feature type="turn" evidence="7">
    <location>
        <begin position="157"/>
        <end position="159"/>
    </location>
</feature>
<feature type="helix" evidence="7">
    <location>
        <begin position="162"/>
        <end position="169"/>
    </location>
</feature>
<feature type="helix" evidence="7">
    <location>
        <begin position="171"/>
        <end position="181"/>
    </location>
</feature>
<feature type="helix" evidence="7">
    <location>
        <begin position="185"/>
        <end position="187"/>
    </location>
</feature>
<feature type="strand" evidence="7">
    <location>
        <begin position="188"/>
        <end position="194"/>
    </location>
</feature>
<feature type="strand" evidence="7">
    <location>
        <begin position="196"/>
        <end position="198"/>
    </location>
</feature>
<feature type="helix" evidence="7">
    <location>
        <begin position="199"/>
        <end position="211"/>
    </location>
</feature>
<feature type="strand" evidence="7">
    <location>
        <begin position="216"/>
        <end position="222"/>
    </location>
</feature>
<feature type="strand" evidence="7">
    <location>
        <begin position="228"/>
        <end position="230"/>
    </location>
</feature>
<feature type="helix" evidence="7">
    <location>
        <begin position="231"/>
        <end position="234"/>
    </location>
</feature>
<feature type="helix" evidence="7">
    <location>
        <begin position="257"/>
        <end position="259"/>
    </location>
</feature>
<feature type="strand" evidence="7">
    <location>
        <begin position="261"/>
        <end position="266"/>
    </location>
</feature>
<feature type="helix" evidence="7">
    <location>
        <begin position="268"/>
        <end position="282"/>
    </location>
</feature>
<feature type="helix" evidence="7">
    <location>
        <begin position="288"/>
        <end position="303"/>
    </location>
</feature>
<feature type="strand" evidence="7">
    <location>
        <begin position="312"/>
        <end position="317"/>
    </location>
</feature>
<feature type="helix" evidence="7">
    <location>
        <begin position="321"/>
        <end position="324"/>
    </location>
</feature>
<feature type="turn" evidence="7">
    <location>
        <begin position="325"/>
        <end position="329"/>
    </location>
</feature>
<feature type="helix" evidence="7">
    <location>
        <begin position="331"/>
        <end position="336"/>
    </location>
</feature>
<feature type="helix" evidence="7">
    <location>
        <begin position="342"/>
        <end position="345"/>
    </location>
</feature>
<comment type="catalytic activity">
    <reaction>
        <text>L-homocysteine + L-serine = L,L-cystathionine + H2O</text>
        <dbReference type="Rhea" id="RHEA:10112"/>
        <dbReference type="ChEBI" id="CHEBI:15377"/>
        <dbReference type="ChEBI" id="CHEBI:33384"/>
        <dbReference type="ChEBI" id="CHEBI:58161"/>
        <dbReference type="ChEBI" id="CHEBI:58199"/>
        <dbReference type="EC" id="4.2.1.22"/>
    </reaction>
</comment>
<comment type="cofactor">
    <cofactor>
        <name>pyridoxal 5'-phosphate</name>
        <dbReference type="ChEBI" id="CHEBI:597326"/>
    </cofactor>
</comment>
<comment type="pathway">
    <text>Amino-acid biosynthesis; L-cysteine biosynthesis; L-cysteine from L-homocysteine and L-serine: step 1/2.</text>
</comment>
<comment type="miscellaneous">
    <text evidence="3">Present with 41900 molecules/cell in log phase SD medium.</text>
</comment>
<comment type="similarity">
    <text evidence="4">Belongs to the cysteine synthase/cystathionine beta-synthase family.</text>
</comment>
<keyword id="KW-0002">3D-structure</keyword>
<keyword id="KW-0028">Amino-acid biosynthesis</keyword>
<keyword id="KW-0129">CBS domain</keyword>
<keyword id="KW-0198">Cysteine biosynthesis</keyword>
<keyword id="KW-0456">Lyase</keyword>
<keyword id="KW-0597">Phosphoprotein</keyword>
<keyword id="KW-0663">Pyridoxal phosphate</keyword>
<keyword id="KW-1185">Reference proteome</keyword>
<accession>P32582</accession>
<accession>D6VUT5</accession>
<accession>Q05177</accession>
<accession>Q27JK1</accession>
<accession>Q27JK4</accession>
<evidence type="ECO:0000250" key="1"/>
<evidence type="ECO:0000255" key="2">
    <source>
        <dbReference type="PROSITE-ProRule" id="PRU00703"/>
    </source>
</evidence>
<evidence type="ECO:0000269" key="3">
    <source>
    </source>
</evidence>
<evidence type="ECO:0000305" key="4"/>
<evidence type="ECO:0007744" key="5">
    <source>
    </source>
</evidence>
<evidence type="ECO:0007744" key="6">
    <source>
    </source>
</evidence>
<evidence type="ECO:0007829" key="7">
    <source>
        <dbReference type="PDB" id="6C2Z"/>
    </source>
</evidence>
<dbReference type="EC" id="4.2.1.22"/>
<dbReference type="EMBL" id="X72922">
    <property type="protein sequence ID" value="CAA51426.1"/>
    <property type="molecule type" value="Genomic_DNA"/>
</dbReference>
<dbReference type="EMBL" id="D16502">
    <property type="protein sequence ID" value="BAA03952.1"/>
    <property type="molecule type" value="Genomic_DNA"/>
</dbReference>
<dbReference type="EMBL" id="L14578">
    <property type="protein sequence ID" value="AAC37401.1"/>
    <property type="molecule type" value="Unassigned_DNA"/>
</dbReference>
<dbReference type="EMBL" id="DQ393806">
    <property type="protein sequence ID" value="ABD57960.1"/>
    <property type="molecule type" value="Genomic_DNA"/>
</dbReference>
<dbReference type="EMBL" id="DQ393807">
    <property type="protein sequence ID" value="ABD57961.1"/>
    <property type="molecule type" value="Genomic_DNA"/>
</dbReference>
<dbReference type="EMBL" id="DQ393808">
    <property type="protein sequence ID" value="ABD57962.1"/>
    <property type="molecule type" value="Genomic_DNA"/>
</dbReference>
<dbReference type="EMBL" id="DQ393809">
    <property type="protein sequence ID" value="ABD57963.1"/>
    <property type="molecule type" value="Genomic_DNA"/>
</dbReference>
<dbReference type="EMBL" id="X85807">
    <property type="protein sequence ID" value="CAA59812.1"/>
    <property type="molecule type" value="Genomic_DNA"/>
</dbReference>
<dbReference type="EMBL" id="Z72940">
    <property type="protein sequence ID" value="CAA97169.1"/>
    <property type="molecule type" value="Genomic_DNA"/>
</dbReference>
<dbReference type="EMBL" id="BK006941">
    <property type="protein sequence ID" value="DAA08246.1"/>
    <property type="molecule type" value="Genomic_DNA"/>
</dbReference>
<dbReference type="PIR" id="A48661">
    <property type="entry name" value="A48661"/>
</dbReference>
<dbReference type="RefSeq" id="NP_011671.3">
    <property type="nucleotide sequence ID" value="NM_001181284.3"/>
</dbReference>
<dbReference type="PDB" id="6C2H">
    <property type="method" value="X-ray"/>
    <property type="resolution" value="1.49 A"/>
    <property type="chains" value="A=1-353"/>
</dbReference>
<dbReference type="PDB" id="6C2Q">
    <property type="method" value="X-ray"/>
    <property type="resolution" value="2.17 A"/>
    <property type="chains" value="A=1-353"/>
</dbReference>
<dbReference type="PDB" id="6C2Z">
    <property type="method" value="X-ray"/>
    <property type="resolution" value="1.37 A"/>
    <property type="chains" value="A=1-353"/>
</dbReference>
<dbReference type="PDB" id="6C4P">
    <property type="method" value="X-ray"/>
    <property type="resolution" value="2.30 A"/>
    <property type="chains" value="A=1-353"/>
</dbReference>
<dbReference type="PDBsum" id="6C2H"/>
<dbReference type="PDBsum" id="6C2Q"/>
<dbReference type="PDBsum" id="6C2Z"/>
<dbReference type="PDBsum" id="6C4P"/>
<dbReference type="SMR" id="P32582"/>
<dbReference type="BioGRID" id="33403">
    <property type="interactions" value="235"/>
</dbReference>
<dbReference type="DIP" id="DIP-1282N"/>
<dbReference type="FunCoup" id="P32582">
    <property type="interactions" value="1166"/>
</dbReference>
<dbReference type="IntAct" id="P32582">
    <property type="interactions" value="37"/>
</dbReference>
<dbReference type="MINT" id="P32582"/>
<dbReference type="STRING" id="4932.YGR155W"/>
<dbReference type="GlyGen" id="P32582">
    <property type="glycosylation" value="1 site"/>
</dbReference>
<dbReference type="iPTMnet" id="P32582"/>
<dbReference type="PaxDb" id="4932-YGR155W"/>
<dbReference type="PeptideAtlas" id="P32582"/>
<dbReference type="EnsemblFungi" id="YGR155W_mRNA">
    <property type="protein sequence ID" value="YGR155W"/>
    <property type="gene ID" value="YGR155W"/>
</dbReference>
<dbReference type="GeneID" id="853059"/>
<dbReference type="KEGG" id="sce:YGR155W"/>
<dbReference type="AGR" id="SGD:S000003387"/>
<dbReference type="SGD" id="S000003387">
    <property type="gene designation" value="CYS4"/>
</dbReference>
<dbReference type="VEuPathDB" id="FungiDB:YGR155W"/>
<dbReference type="eggNOG" id="KOG1252">
    <property type="taxonomic scope" value="Eukaryota"/>
</dbReference>
<dbReference type="GeneTree" id="ENSGT00510000047027"/>
<dbReference type="HOGENOM" id="CLU_021018_0_0_1"/>
<dbReference type="InParanoid" id="P32582"/>
<dbReference type="OMA" id="KFADDEW"/>
<dbReference type="OrthoDB" id="728at2759"/>
<dbReference type="BioCyc" id="MetaCyc:YGR155W-MONOMER"/>
<dbReference type="BioCyc" id="YEAST:YGR155W-MONOMER"/>
<dbReference type="BRENDA" id="4.2.1.22">
    <property type="organism ID" value="984"/>
</dbReference>
<dbReference type="Reactome" id="R-SCE-1614603">
    <property type="pathway name" value="Cysteine formation from homocysteine"/>
</dbReference>
<dbReference type="SABIO-RK" id="P32582"/>
<dbReference type="UniPathway" id="UPA00136">
    <property type="reaction ID" value="UER00201"/>
</dbReference>
<dbReference type="BioGRID-ORCS" id="853059">
    <property type="hits" value="1 hit in 10 CRISPR screens"/>
</dbReference>
<dbReference type="CD-CODE" id="E03F929F">
    <property type="entry name" value="Stress granule"/>
</dbReference>
<dbReference type="PRO" id="PR:P32582"/>
<dbReference type="Proteomes" id="UP000002311">
    <property type="component" value="Chromosome VII"/>
</dbReference>
<dbReference type="RNAct" id="P32582">
    <property type="molecule type" value="protein"/>
</dbReference>
<dbReference type="GO" id="GO:0005737">
    <property type="term" value="C:cytoplasm"/>
    <property type="evidence" value="ECO:0000314"/>
    <property type="project" value="SGD"/>
</dbReference>
<dbReference type="GO" id="GO:0010494">
    <property type="term" value="C:cytoplasmic stress granule"/>
    <property type="evidence" value="ECO:0007005"/>
    <property type="project" value="SGD"/>
</dbReference>
<dbReference type="GO" id="GO:0005739">
    <property type="term" value="C:mitochondrion"/>
    <property type="evidence" value="ECO:0007005"/>
    <property type="project" value="SGD"/>
</dbReference>
<dbReference type="GO" id="GO:0004122">
    <property type="term" value="F:cystathionine beta-synthase activity"/>
    <property type="evidence" value="ECO:0000314"/>
    <property type="project" value="SGD"/>
</dbReference>
<dbReference type="GO" id="GO:0003729">
    <property type="term" value="F:mRNA binding"/>
    <property type="evidence" value="ECO:0007005"/>
    <property type="project" value="SGD"/>
</dbReference>
<dbReference type="GO" id="GO:0006535">
    <property type="term" value="P:cysteine biosynthetic process from serine"/>
    <property type="evidence" value="ECO:0000314"/>
    <property type="project" value="SGD"/>
</dbReference>
<dbReference type="GO" id="GO:0019343">
    <property type="term" value="P:cysteine biosynthetic process via cystathionine"/>
    <property type="evidence" value="ECO:0000315"/>
    <property type="project" value="SGD"/>
</dbReference>
<dbReference type="GO" id="GO:0070814">
    <property type="term" value="P:hydrogen sulfide biosynthetic process"/>
    <property type="evidence" value="ECO:0000314"/>
    <property type="project" value="SGD"/>
</dbReference>
<dbReference type="GO" id="GO:0019346">
    <property type="term" value="P:transsulfuration"/>
    <property type="evidence" value="ECO:0000315"/>
    <property type="project" value="SGD"/>
</dbReference>
<dbReference type="GO" id="GO:0007089">
    <property type="term" value="P:traversing start control point of mitotic cell cycle"/>
    <property type="evidence" value="ECO:0000315"/>
    <property type="project" value="SGD"/>
</dbReference>
<dbReference type="CDD" id="cd01561">
    <property type="entry name" value="CBS_like"/>
    <property type="match status" value="1"/>
</dbReference>
<dbReference type="CDD" id="cd04608">
    <property type="entry name" value="CBS_pair_CBS"/>
    <property type="match status" value="1"/>
</dbReference>
<dbReference type="FunFam" id="3.10.580.10:FF:000052">
    <property type="entry name" value="Cystathionine beta-synthase"/>
    <property type="match status" value="1"/>
</dbReference>
<dbReference type="FunFam" id="3.40.50.1100:FF:000003">
    <property type="entry name" value="Cystathionine beta-synthase"/>
    <property type="match status" value="1"/>
</dbReference>
<dbReference type="FunFam" id="3.40.50.1100:FF:000118">
    <property type="entry name" value="Related to CYS4-cystathionine beta-synthase"/>
    <property type="match status" value="1"/>
</dbReference>
<dbReference type="Gene3D" id="3.40.50.1100">
    <property type="match status" value="2"/>
</dbReference>
<dbReference type="Gene3D" id="3.10.580.10">
    <property type="entry name" value="CBS-domain"/>
    <property type="match status" value="1"/>
</dbReference>
<dbReference type="InterPro" id="IPR046353">
    <property type="entry name" value="CBS_C"/>
</dbReference>
<dbReference type="InterPro" id="IPR000644">
    <property type="entry name" value="CBS_dom"/>
</dbReference>
<dbReference type="InterPro" id="IPR046342">
    <property type="entry name" value="CBS_dom_sf"/>
</dbReference>
<dbReference type="InterPro" id="IPR050214">
    <property type="entry name" value="Cys_Synth/Cystath_Beta-Synth"/>
</dbReference>
<dbReference type="InterPro" id="IPR005857">
    <property type="entry name" value="Cysta_beta_synth"/>
</dbReference>
<dbReference type="InterPro" id="IPR001216">
    <property type="entry name" value="P-phosphate_BS"/>
</dbReference>
<dbReference type="InterPro" id="IPR001926">
    <property type="entry name" value="TrpB-like_PALP"/>
</dbReference>
<dbReference type="InterPro" id="IPR036052">
    <property type="entry name" value="TrpB-like_PALP_sf"/>
</dbReference>
<dbReference type="NCBIfam" id="TIGR01137">
    <property type="entry name" value="cysta_beta"/>
    <property type="match status" value="1"/>
</dbReference>
<dbReference type="PANTHER" id="PTHR10314">
    <property type="entry name" value="CYSTATHIONINE BETA-SYNTHASE"/>
    <property type="match status" value="1"/>
</dbReference>
<dbReference type="Pfam" id="PF00571">
    <property type="entry name" value="CBS"/>
    <property type="match status" value="1"/>
</dbReference>
<dbReference type="Pfam" id="PF00291">
    <property type="entry name" value="PALP"/>
    <property type="match status" value="1"/>
</dbReference>
<dbReference type="SMART" id="SM00116">
    <property type="entry name" value="CBS"/>
    <property type="match status" value="2"/>
</dbReference>
<dbReference type="SUPFAM" id="SSF54631">
    <property type="entry name" value="CBS-domain pair"/>
    <property type="match status" value="1"/>
</dbReference>
<dbReference type="SUPFAM" id="SSF53686">
    <property type="entry name" value="Tryptophan synthase beta subunit-like PLP-dependent enzymes"/>
    <property type="match status" value="1"/>
</dbReference>
<dbReference type="PROSITE" id="PS51371">
    <property type="entry name" value="CBS"/>
    <property type="match status" value="1"/>
</dbReference>
<dbReference type="PROSITE" id="PS00901">
    <property type="entry name" value="CYS_SYNTHASE"/>
    <property type="match status" value="1"/>
</dbReference>
<sequence>MTKSEQQADSRHNVIDLVGNTPLIALKKLPKALGIKPQIYAKLELYNPGGSIKDRIAKSMVEEAEASGRIHPSRSTLIEPTSGNTGIGLALIGAIKGYRTIITLPEKMSNEKVSVLKALGAEIIRTPTAAAWDSPESHIGVAKKLEKEIPGAVILDQYNNMMNPEAHYFGTGREIQRQLEDLNLFDNLRAVVAGAGTGGTISGISKYLKEQNDKIQIVGADPFGSILAQPENLNKTDITDYKVEGIGYDFVPQVLDRKLIDVWYKTDDKPSFKYARQLISNEGVLVGGSSGSAFTAVVKYCEDHPELTEDDVIVAIFPDSIRSYLTKFVDDEWLKKNNLWDDDVLARFDSSKLEASTTKYADVFGNATVKDLHLKPVVSVKETAKVTDVIKILKDNGFDQLPVLTEDGKLSGLVTLSELLRKLSINNSNNDNTIKGKYLDFKKLNNFNDVSSYNENKSGKKKFIKFDENSKLSDLNRFFEKNSSAVITDGLKPIHIVTKMDLLSYLA</sequence>
<reference key="1">
    <citation type="journal article" date="1993" name="J. Bacteriol.">
        <title>Cysteine biosynthesis in Saccharomyces cerevisiae occurs through the transsulfuration pathway which has been built up by enzyme recruitment.</title>
        <authorList>
            <person name="Cherest H."/>
            <person name="Thomas D."/>
            <person name="Surdin-Kerjan Y."/>
        </authorList>
    </citation>
    <scope>NUCLEOTIDE SEQUENCE [GENOMIC DNA]</scope>
    <source>
        <strain>ATCC 26786 / X2180-1A</strain>
    </source>
</reference>
<reference key="2">
    <citation type="submission" date="1993-06" db="EMBL/GenBank/DDBJ databases">
        <title>Identification of the structural gene of cystathionine beta-synthase in saccharomyces cerevisiae.</title>
        <authorList>
            <person name="Ono B."/>
            <person name="Inoue T."/>
            <person name="Kijima K."/>
            <person name="Matsuda A."/>
            <person name="Negishi K."/>
            <person name="Shinoda S."/>
        </authorList>
    </citation>
    <scope>NUCLEOTIDE SEQUENCE [GENOMIC DNA]</scope>
    <source>
        <strain>A5-8-1A</strain>
    </source>
</reference>
<reference key="3">
    <citation type="journal article" date="1994" name="Proc. Natl. Acad. Sci. U.S.A.">
        <title>A yeast system for expression of human cystathionine beta-synthase: structural and functional conservation of the human and yeast genes.</title>
        <authorList>
            <person name="Kruger W.D."/>
            <person name="Cox D.R."/>
        </authorList>
    </citation>
    <scope>NUCLEOTIDE SEQUENCE [GENOMIC DNA]</scope>
    <source>
        <strain>ATCC 204508 / S288c</strain>
    </source>
</reference>
<reference key="4">
    <citation type="submission" date="2006-02" db="EMBL/GenBank/DDBJ databases">
        <title>Allele diversity among genes of the sulfate reduction pathway in wine strains of Saccharomyces cerevisiae.</title>
        <authorList>
            <person name="Linderholm A.L."/>
            <person name="Bisson L.F."/>
        </authorList>
    </citation>
    <scope>NUCLEOTIDE SEQUENCE [GENOMIC DNA]</scope>
    <source>
        <strain>UCD932</strain>
        <strain>UCD939</strain>
        <strain>UCD940</strain>
        <strain>UCD957</strain>
    </source>
</reference>
<reference key="5">
    <citation type="journal article" date="1995" name="Yeast">
        <title>The sequence of a 27 kb segment on the right arm of chromosome VII from Saccharomyces cerevisiae reveals MOL1, NAT2, RPL30B, RSR1, CYS4, PEM1/CHO2, NSR1 genes and ten new open reading frames.</title>
        <authorList>
            <person name="Skala J."/>
            <person name="Nawrocki A."/>
            <person name="Goffeau A."/>
        </authorList>
    </citation>
    <scope>NUCLEOTIDE SEQUENCE [GENOMIC DNA]</scope>
    <source>
        <strain>ATCC 204508 / S288c</strain>
    </source>
</reference>
<reference key="6">
    <citation type="journal article" date="1997" name="Nature">
        <title>The nucleotide sequence of Saccharomyces cerevisiae chromosome VII.</title>
        <authorList>
            <person name="Tettelin H."/>
            <person name="Agostoni-Carbone M.L."/>
            <person name="Albermann K."/>
            <person name="Albers M."/>
            <person name="Arroyo J."/>
            <person name="Backes U."/>
            <person name="Barreiros T."/>
            <person name="Bertani I."/>
            <person name="Bjourson A.J."/>
            <person name="Brueckner M."/>
            <person name="Bruschi C.V."/>
            <person name="Carignani G."/>
            <person name="Castagnoli L."/>
            <person name="Cerdan E."/>
            <person name="Clemente M.L."/>
            <person name="Coblenz A."/>
            <person name="Coglievina M."/>
            <person name="Coissac E."/>
            <person name="Defoor E."/>
            <person name="Del Bino S."/>
            <person name="Delius H."/>
            <person name="Delneri D."/>
            <person name="de Wergifosse P."/>
            <person name="Dujon B."/>
            <person name="Durand P."/>
            <person name="Entian K.-D."/>
            <person name="Eraso P."/>
            <person name="Escribano V."/>
            <person name="Fabiani L."/>
            <person name="Fartmann B."/>
            <person name="Feroli F."/>
            <person name="Feuermann M."/>
            <person name="Frontali L."/>
            <person name="Garcia-Gonzalez M."/>
            <person name="Garcia-Saez M.I."/>
            <person name="Goffeau A."/>
            <person name="Guerreiro P."/>
            <person name="Hani J."/>
            <person name="Hansen M."/>
            <person name="Hebling U."/>
            <person name="Hernandez K."/>
            <person name="Heumann K."/>
            <person name="Hilger F."/>
            <person name="Hofmann B."/>
            <person name="Indge K.J."/>
            <person name="James C.M."/>
            <person name="Klima R."/>
            <person name="Koetter P."/>
            <person name="Kramer B."/>
            <person name="Kramer W."/>
            <person name="Lauquin G."/>
            <person name="Leuther H."/>
            <person name="Louis E.J."/>
            <person name="Maillier E."/>
            <person name="Marconi A."/>
            <person name="Martegani E."/>
            <person name="Mazon M.J."/>
            <person name="Mazzoni C."/>
            <person name="McReynolds A.D.K."/>
            <person name="Melchioretto P."/>
            <person name="Mewes H.-W."/>
            <person name="Minenkova O."/>
            <person name="Mueller-Auer S."/>
            <person name="Nawrocki A."/>
            <person name="Netter P."/>
            <person name="Neu R."/>
            <person name="Nombela C."/>
            <person name="Oliver S.G."/>
            <person name="Panzeri L."/>
            <person name="Paoluzi S."/>
            <person name="Plevani P."/>
            <person name="Portetelle D."/>
            <person name="Portillo F."/>
            <person name="Potier S."/>
            <person name="Purnelle B."/>
            <person name="Rieger M."/>
            <person name="Riles L."/>
            <person name="Rinaldi T."/>
            <person name="Robben J."/>
            <person name="Rodrigues-Pousada C."/>
            <person name="Rodriguez-Belmonte E."/>
            <person name="Rodriguez-Torres A.M."/>
            <person name="Rose M."/>
            <person name="Ruzzi M."/>
            <person name="Saliola M."/>
            <person name="Sanchez-Perez M."/>
            <person name="Schaefer B."/>
            <person name="Schaefer M."/>
            <person name="Scharfe M."/>
            <person name="Schmidheini T."/>
            <person name="Schreer A."/>
            <person name="Skala J."/>
            <person name="Souciet J.-L."/>
            <person name="Steensma H.Y."/>
            <person name="Talla E."/>
            <person name="Thierry A."/>
            <person name="Vandenbol M."/>
            <person name="van der Aart Q.J.M."/>
            <person name="Van Dyck L."/>
            <person name="Vanoni M."/>
            <person name="Verhasselt P."/>
            <person name="Voet M."/>
            <person name="Volckaert G."/>
            <person name="Wambutt R."/>
            <person name="Watson M.D."/>
            <person name="Weber N."/>
            <person name="Wedler E."/>
            <person name="Wedler H."/>
            <person name="Wipfli P."/>
            <person name="Wolf K."/>
            <person name="Wright L.F."/>
            <person name="Zaccaria P."/>
            <person name="Zimmermann M."/>
            <person name="Zollner A."/>
            <person name="Kleine K."/>
        </authorList>
    </citation>
    <scope>NUCLEOTIDE SEQUENCE [LARGE SCALE GENOMIC DNA]</scope>
    <source>
        <strain>ATCC 204508 / S288c</strain>
    </source>
</reference>
<reference key="7">
    <citation type="journal article" date="2014" name="G3 (Bethesda)">
        <title>The reference genome sequence of Saccharomyces cerevisiae: Then and now.</title>
        <authorList>
            <person name="Engel S.R."/>
            <person name="Dietrich F.S."/>
            <person name="Fisk D.G."/>
            <person name="Binkley G."/>
            <person name="Balakrishnan R."/>
            <person name="Costanzo M.C."/>
            <person name="Dwight S.S."/>
            <person name="Hitz B.C."/>
            <person name="Karra K."/>
            <person name="Nash R.S."/>
            <person name="Weng S."/>
            <person name="Wong E.D."/>
            <person name="Lloyd P."/>
            <person name="Skrzypek M.S."/>
            <person name="Miyasato S.R."/>
            <person name="Simison M."/>
            <person name="Cherry J.M."/>
        </authorList>
    </citation>
    <scope>GENOME REANNOTATION</scope>
    <source>
        <strain>ATCC 204508 / S288c</strain>
    </source>
</reference>
<reference key="8">
    <citation type="journal article" date="2003" name="Nature">
        <title>Global analysis of protein expression in yeast.</title>
        <authorList>
            <person name="Ghaemmaghami S."/>
            <person name="Huh W.-K."/>
            <person name="Bower K."/>
            <person name="Howson R.W."/>
            <person name="Belle A."/>
            <person name="Dephoure N."/>
            <person name="O'Shea E.K."/>
            <person name="Weissman J.S."/>
        </authorList>
    </citation>
    <scope>LEVEL OF PROTEIN EXPRESSION [LARGE SCALE ANALYSIS]</scope>
</reference>
<reference key="9">
    <citation type="journal article" date="2007" name="J. Proteome Res.">
        <title>Large-scale phosphorylation analysis of alpha-factor-arrested Saccharomyces cerevisiae.</title>
        <authorList>
            <person name="Li X."/>
            <person name="Gerber S.A."/>
            <person name="Rudner A.D."/>
            <person name="Beausoleil S.A."/>
            <person name="Haas W."/>
            <person name="Villen J."/>
            <person name="Elias J.E."/>
            <person name="Gygi S.P."/>
        </authorList>
    </citation>
    <scope>IDENTIFICATION BY MASS SPECTROMETRY [LARGE SCALE ANALYSIS]</scope>
    <source>
        <strain>ADR376</strain>
    </source>
</reference>
<reference key="10">
    <citation type="journal article" date="2008" name="Mol. Cell. Proteomics">
        <title>A multidimensional chromatography technology for in-depth phosphoproteome analysis.</title>
        <authorList>
            <person name="Albuquerque C.P."/>
            <person name="Smolka M.B."/>
            <person name="Payne S.H."/>
            <person name="Bafna V."/>
            <person name="Eng J."/>
            <person name="Zhou H."/>
        </authorList>
    </citation>
    <scope>PHOSPHORYLATION [LARGE SCALE ANALYSIS] AT SER-134 AND SER-424</scope>
    <scope>IDENTIFICATION BY MASS SPECTROMETRY [LARGE SCALE ANALYSIS]</scope>
</reference>
<reference key="11">
    <citation type="journal article" date="2009" name="Science">
        <title>Global analysis of Cdk1 substrate phosphorylation sites provides insights into evolution.</title>
        <authorList>
            <person name="Holt L.J."/>
            <person name="Tuch B.B."/>
            <person name="Villen J."/>
            <person name="Johnson A.D."/>
            <person name="Gygi S.P."/>
            <person name="Morgan D.O."/>
        </authorList>
    </citation>
    <scope>PHOSPHORYLATION [LARGE SCALE ANALYSIS] AT SER-350 AND SER-424</scope>
    <scope>IDENTIFICATION BY MASS SPECTROMETRY [LARGE SCALE ANALYSIS]</scope>
</reference>
<reference key="12">
    <citation type="journal article" date="2012" name="Proc. Natl. Acad. Sci. U.S.A.">
        <title>N-terminal acetylome analyses and functional insights of the N-terminal acetyltransferase NatB.</title>
        <authorList>
            <person name="Van Damme P."/>
            <person name="Lasa M."/>
            <person name="Polevoda B."/>
            <person name="Gazquez C."/>
            <person name="Elosegui-Artola A."/>
            <person name="Kim D.S."/>
            <person name="De Juan-Pardo E."/>
            <person name="Demeyer K."/>
            <person name="Hole K."/>
            <person name="Larrea E."/>
            <person name="Timmerman E."/>
            <person name="Prieto J."/>
            <person name="Arnesen T."/>
            <person name="Sherman F."/>
            <person name="Gevaert K."/>
            <person name="Aldabe R."/>
        </authorList>
    </citation>
    <scope>IDENTIFICATION BY MASS SPECTROMETRY [LARGE SCALE ANALYSIS]</scope>
</reference>
<protein>
    <recommendedName>
        <fullName>Cystathionine beta-synthase</fullName>
        <ecNumber>4.2.1.22</ecNumber>
    </recommendedName>
    <alternativeName>
        <fullName>Beta-thionase</fullName>
    </alternativeName>
    <alternativeName>
        <fullName>Serine sulfhydrase</fullName>
    </alternativeName>
    <alternativeName>
        <fullName>Sulfur transfer protein 4</fullName>
    </alternativeName>
</protein>
<name>CBS_YEAST</name>
<proteinExistence type="evidence at protein level"/>
<gene>
    <name type="primary">CYS4</name>
    <name type="synonym">STR4</name>
    <name type="ordered locus">YGR155W</name>
    <name type="ORF">G6667</name>
</gene>